<dbReference type="EC" id="6.2.1.1" evidence="1"/>
<dbReference type="EMBL" id="CP000758">
    <property type="protein sequence ID" value="ABS13812.1"/>
    <property type="molecule type" value="Genomic_DNA"/>
</dbReference>
<dbReference type="SMR" id="A6WXV8"/>
<dbReference type="STRING" id="439375.Oant_1092"/>
<dbReference type="KEGG" id="oan:Oant_1092"/>
<dbReference type="eggNOG" id="COG0365">
    <property type="taxonomic scope" value="Bacteria"/>
</dbReference>
<dbReference type="HOGENOM" id="CLU_000022_3_6_5"/>
<dbReference type="Proteomes" id="UP000002301">
    <property type="component" value="Chromosome 1"/>
</dbReference>
<dbReference type="GO" id="GO:0005829">
    <property type="term" value="C:cytosol"/>
    <property type="evidence" value="ECO:0007669"/>
    <property type="project" value="TreeGrafter"/>
</dbReference>
<dbReference type="GO" id="GO:0003987">
    <property type="term" value="F:acetate-CoA ligase activity"/>
    <property type="evidence" value="ECO:0007669"/>
    <property type="project" value="UniProtKB-UniRule"/>
</dbReference>
<dbReference type="GO" id="GO:0016208">
    <property type="term" value="F:AMP binding"/>
    <property type="evidence" value="ECO:0007669"/>
    <property type="project" value="InterPro"/>
</dbReference>
<dbReference type="GO" id="GO:0005524">
    <property type="term" value="F:ATP binding"/>
    <property type="evidence" value="ECO:0007669"/>
    <property type="project" value="UniProtKB-KW"/>
</dbReference>
<dbReference type="GO" id="GO:0046872">
    <property type="term" value="F:metal ion binding"/>
    <property type="evidence" value="ECO:0007669"/>
    <property type="project" value="UniProtKB-KW"/>
</dbReference>
<dbReference type="GO" id="GO:0019427">
    <property type="term" value="P:acetyl-CoA biosynthetic process from acetate"/>
    <property type="evidence" value="ECO:0007669"/>
    <property type="project" value="InterPro"/>
</dbReference>
<dbReference type="CDD" id="cd05966">
    <property type="entry name" value="ACS"/>
    <property type="match status" value="1"/>
</dbReference>
<dbReference type="FunFam" id="3.30.300.30:FF:000004">
    <property type="entry name" value="Acetyl-coenzyme A synthetase"/>
    <property type="match status" value="1"/>
</dbReference>
<dbReference type="FunFam" id="3.40.50.12780:FF:000001">
    <property type="entry name" value="Acetyl-coenzyme A synthetase"/>
    <property type="match status" value="1"/>
</dbReference>
<dbReference type="Gene3D" id="3.30.300.30">
    <property type="match status" value="1"/>
</dbReference>
<dbReference type="Gene3D" id="3.40.50.12780">
    <property type="entry name" value="N-terminal domain of ligase-like"/>
    <property type="match status" value="1"/>
</dbReference>
<dbReference type="HAMAP" id="MF_01123">
    <property type="entry name" value="Ac_CoA_synth"/>
    <property type="match status" value="1"/>
</dbReference>
<dbReference type="InterPro" id="IPR011904">
    <property type="entry name" value="Ac_CoA_lig"/>
</dbReference>
<dbReference type="InterPro" id="IPR032387">
    <property type="entry name" value="ACAS_N"/>
</dbReference>
<dbReference type="InterPro" id="IPR025110">
    <property type="entry name" value="AMP-bd_C"/>
</dbReference>
<dbReference type="InterPro" id="IPR045851">
    <property type="entry name" value="AMP-bd_C_sf"/>
</dbReference>
<dbReference type="InterPro" id="IPR020845">
    <property type="entry name" value="AMP-binding_CS"/>
</dbReference>
<dbReference type="InterPro" id="IPR000873">
    <property type="entry name" value="AMP-dep_synth/lig_dom"/>
</dbReference>
<dbReference type="InterPro" id="IPR042099">
    <property type="entry name" value="ANL_N_sf"/>
</dbReference>
<dbReference type="NCBIfam" id="TIGR02188">
    <property type="entry name" value="Ac_CoA_lig_AcsA"/>
    <property type="match status" value="1"/>
</dbReference>
<dbReference type="NCBIfam" id="NF001208">
    <property type="entry name" value="PRK00174.1"/>
    <property type="match status" value="1"/>
</dbReference>
<dbReference type="PANTHER" id="PTHR24095">
    <property type="entry name" value="ACETYL-COENZYME A SYNTHETASE"/>
    <property type="match status" value="1"/>
</dbReference>
<dbReference type="PANTHER" id="PTHR24095:SF14">
    <property type="entry name" value="ACETYL-COENZYME A SYNTHETASE 1"/>
    <property type="match status" value="1"/>
</dbReference>
<dbReference type="Pfam" id="PF16177">
    <property type="entry name" value="ACAS_N"/>
    <property type="match status" value="1"/>
</dbReference>
<dbReference type="Pfam" id="PF00501">
    <property type="entry name" value="AMP-binding"/>
    <property type="match status" value="1"/>
</dbReference>
<dbReference type="Pfam" id="PF13193">
    <property type="entry name" value="AMP-binding_C"/>
    <property type="match status" value="1"/>
</dbReference>
<dbReference type="SUPFAM" id="SSF56801">
    <property type="entry name" value="Acetyl-CoA synthetase-like"/>
    <property type="match status" value="1"/>
</dbReference>
<dbReference type="PROSITE" id="PS00455">
    <property type="entry name" value="AMP_BINDING"/>
    <property type="match status" value="1"/>
</dbReference>
<proteinExistence type="inferred from homology"/>
<protein>
    <recommendedName>
        <fullName evidence="1">Acetyl-coenzyme A synthetase</fullName>
        <shortName evidence="1">AcCoA synthetase</shortName>
        <shortName evidence="1">Acs</shortName>
        <ecNumber evidence="1">6.2.1.1</ecNumber>
    </recommendedName>
    <alternativeName>
        <fullName evidence="1">Acetate--CoA ligase</fullName>
    </alternativeName>
    <alternativeName>
        <fullName evidence="1">Acyl-activating enzyme</fullName>
    </alternativeName>
</protein>
<name>ACSA_BRUA4</name>
<organism>
    <name type="scientific">Brucella anthropi (strain ATCC 49188 / DSM 6882 / CCUG 24695 / JCM 21032 / LMG 3331 / NBRC 15819 / NCTC 12168 / Alc 37)</name>
    <name type="common">Ochrobactrum anthropi</name>
    <dbReference type="NCBI Taxonomy" id="439375"/>
    <lineage>
        <taxon>Bacteria</taxon>
        <taxon>Pseudomonadati</taxon>
        <taxon>Pseudomonadota</taxon>
        <taxon>Alphaproteobacteria</taxon>
        <taxon>Hyphomicrobiales</taxon>
        <taxon>Brucellaceae</taxon>
        <taxon>Brucella/Ochrobactrum group</taxon>
        <taxon>Brucella</taxon>
    </lineage>
</organism>
<gene>
    <name evidence="1" type="primary">acsA</name>
    <name type="ordered locus">Oant_1092</name>
</gene>
<comment type="function">
    <text evidence="1">Catalyzes the conversion of acetate into acetyl-CoA (AcCoA), an essential intermediate at the junction of anabolic and catabolic pathways. AcsA undergoes a two-step reaction. In the first half reaction, AcsA combines acetate with ATP to form acetyl-adenylate (AcAMP) intermediate. In the second half reaction, it can then transfer the acetyl group from AcAMP to the sulfhydryl group of CoA, forming the product AcCoA.</text>
</comment>
<comment type="catalytic activity">
    <reaction evidence="1">
        <text>acetate + ATP + CoA = acetyl-CoA + AMP + diphosphate</text>
        <dbReference type="Rhea" id="RHEA:23176"/>
        <dbReference type="ChEBI" id="CHEBI:30089"/>
        <dbReference type="ChEBI" id="CHEBI:30616"/>
        <dbReference type="ChEBI" id="CHEBI:33019"/>
        <dbReference type="ChEBI" id="CHEBI:57287"/>
        <dbReference type="ChEBI" id="CHEBI:57288"/>
        <dbReference type="ChEBI" id="CHEBI:456215"/>
        <dbReference type="EC" id="6.2.1.1"/>
    </reaction>
</comment>
<comment type="cofactor">
    <cofactor evidence="1">
        <name>Mg(2+)</name>
        <dbReference type="ChEBI" id="CHEBI:18420"/>
    </cofactor>
</comment>
<comment type="PTM">
    <text evidence="1">Acetylated. Deacetylation by the SIR2-homolog deacetylase activates the enzyme.</text>
</comment>
<comment type="similarity">
    <text evidence="1">Belongs to the ATP-dependent AMP-binding enzyme family.</text>
</comment>
<reference key="1">
    <citation type="journal article" date="2011" name="J. Bacteriol.">
        <title>Genome of Ochrobactrum anthropi ATCC 49188 T, a versatile opportunistic pathogen and symbiont of several eukaryotic hosts.</title>
        <authorList>
            <person name="Chain P.S."/>
            <person name="Lang D.M."/>
            <person name="Comerci D.J."/>
            <person name="Malfatti S.A."/>
            <person name="Vergez L.M."/>
            <person name="Shin M."/>
            <person name="Ugalde R.A."/>
            <person name="Garcia E."/>
            <person name="Tolmasky M.E."/>
        </authorList>
    </citation>
    <scope>NUCLEOTIDE SEQUENCE [LARGE SCALE GENOMIC DNA]</scope>
    <source>
        <strain>ATCC 49188 / DSM 6882 / CCUG 24695 / JCM 21032 / LMG 3331 / NBRC 15819 / NCTC 12168 / Alc 37</strain>
    </source>
</reference>
<evidence type="ECO:0000255" key="1">
    <source>
        <dbReference type="HAMAP-Rule" id="MF_01123"/>
    </source>
</evidence>
<accession>A6WXV8</accession>
<keyword id="KW-0007">Acetylation</keyword>
<keyword id="KW-0067">ATP-binding</keyword>
<keyword id="KW-0436">Ligase</keyword>
<keyword id="KW-0460">Magnesium</keyword>
<keyword id="KW-0479">Metal-binding</keyword>
<keyword id="KW-0547">Nucleotide-binding</keyword>
<keyword id="KW-1185">Reference proteome</keyword>
<sequence length="651" mass="72591">MSEKLYPVLAEAKRNTLIDNATYLEWYQESVSDPDSFWAKHGRRIDWFKPFTKVKNTDFNGDVSIKWYEDGVTNVSYNCIDRHLKSRGDQVAIIWEGDNPYIDKKITYRELHENVCRLANVLKKHGVKKGDRVTIYLPMIPEAAYAMLACARIGAVHSVVFAGFSPEALAGRIVDCESTFVITADEGVRGGKPVPLKENTDTAIDIAAKQYVMVNKVLTVRRTGGKVSWGPGRDLWYHQEVASVEPTCDPEPMNAEDPLFILYTSGSTGKPKGVLHTTGGYLVYASMTHQYVFDYHDGDIYWCTADVGWVTGHSYIVYGPLANGATTLMFEGVPNFPDQGRFWEVVDKHHVNIFYTAPTAIRALMGAGDEFVTRSSRSTLRLLGSVGEPINPEAWEWYYNVVGDQRSPIVDTWWQTETGGILITPLPGATDLKPGSATRPFFGIKPELVDNEGAVIEGAVDGNLCIIDSWPGQMRTLYGDHKRFIEAYFSTYKGKYFTGDGCRRDEDGYYWITGRVDDVLNISGHRLGTAEIESALVSHHSVSEAAVVGYPHPIKGQGIYCYVTLMTGEAVQDEDALRKELTQHVRKEIGPIATPDKIQFSPGLPKTRSGKIMRRILRKIAEDEFGALGDTSTLADPGVVDDLIENRQNKK</sequence>
<feature type="chain" id="PRO_1000065300" description="Acetyl-coenzyme A synthetase">
    <location>
        <begin position="1"/>
        <end position="651"/>
    </location>
</feature>
<feature type="binding site" evidence="1">
    <location>
        <begin position="189"/>
        <end position="192"/>
    </location>
    <ligand>
        <name>CoA</name>
        <dbReference type="ChEBI" id="CHEBI:57287"/>
    </ligand>
</feature>
<feature type="binding site" evidence="1">
    <location>
        <position position="311"/>
    </location>
    <ligand>
        <name>CoA</name>
        <dbReference type="ChEBI" id="CHEBI:57287"/>
    </ligand>
</feature>
<feature type="binding site" evidence="1">
    <location>
        <position position="335"/>
    </location>
    <ligand>
        <name>CoA</name>
        <dbReference type="ChEBI" id="CHEBI:57287"/>
    </ligand>
</feature>
<feature type="binding site" evidence="1">
    <location>
        <begin position="387"/>
        <end position="389"/>
    </location>
    <ligand>
        <name>ATP</name>
        <dbReference type="ChEBI" id="CHEBI:30616"/>
    </ligand>
</feature>
<feature type="binding site" evidence="1">
    <location>
        <begin position="411"/>
        <end position="416"/>
    </location>
    <ligand>
        <name>ATP</name>
        <dbReference type="ChEBI" id="CHEBI:30616"/>
    </ligand>
</feature>
<feature type="binding site" evidence="1">
    <location>
        <position position="500"/>
    </location>
    <ligand>
        <name>ATP</name>
        <dbReference type="ChEBI" id="CHEBI:30616"/>
    </ligand>
</feature>
<feature type="binding site" evidence="1">
    <location>
        <position position="515"/>
    </location>
    <ligand>
        <name>ATP</name>
        <dbReference type="ChEBI" id="CHEBI:30616"/>
    </ligand>
</feature>
<feature type="binding site" evidence="1">
    <location>
        <position position="523"/>
    </location>
    <ligand>
        <name>CoA</name>
        <dbReference type="ChEBI" id="CHEBI:57287"/>
    </ligand>
</feature>
<feature type="binding site" evidence="1">
    <location>
        <position position="526"/>
    </location>
    <ligand>
        <name>ATP</name>
        <dbReference type="ChEBI" id="CHEBI:30616"/>
    </ligand>
</feature>
<feature type="binding site" evidence="1">
    <location>
        <position position="537"/>
    </location>
    <ligand>
        <name>Mg(2+)</name>
        <dbReference type="ChEBI" id="CHEBI:18420"/>
    </ligand>
</feature>
<feature type="binding site" evidence="1">
    <location>
        <position position="539"/>
    </location>
    <ligand>
        <name>Mg(2+)</name>
        <dbReference type="ChEBI" id="CHEBI:18420"/>
    </ligand>
</feature>
<feature type="binding site" evidence="1">
    <location>
        <position position="542"/>
    </location>
    <ligand>
        <name>Mg(2+)</name>
        <dbReference type="ChEBI" id="CHEBI:18420"/>
    </ligand>
</feature>
<feature type="binding site" evidence="1">
    <location>
        <position position="586"/>
    </location>
    <ligand>
        <name>CoA</name>
        <dbReference type="ChEBI" id="CHEBI:57287"/>
    </ligand>
</feature>
<feature type="modified residue" description="N6-acetyllysine" evidence="1">
    <location>
        <position position="611"/>
    </location>
</feature>